<dbReference type="EC" id="6.1.1.5" evidence="1"/>
<dbReference type="EMBL" id="AE015929">
    <property type="protein sequence ID" value="AAO04465.1"/>
    <property type="molecule type" value="Genomic_DNA"/>
</dbReference>
<dbReference type="RefSeq" id="NP_764423.1">
    <property type="nucleotide sequence ID" value="NC_004461.1"/>
</dbReference>
<dbReference type="RefSeq" id="WP_001830138.1">
    <property type="nucleotide sequence ID" value="NZ_WBME01000036.1"/>
</dbReference>
<dbReference type="SMR" id="Q8CSX1"/>
<dbReference type="KEGG" id="sep:SE_0868"/>
<dbReference type="PATRIC" id="fig|176280.10.peg.841"/>
<dbReference type="eggNOG" id="COG0060">
    <property type="taxonomic scope" value="Bacteria"/>
</dbReference>
<dbReference type="HOGENOM" id="CLU_001493_7_1_9"/>
<dbReference type="OrthoDB" id="9810365at2"/>
<dbReference type="Proteomes" id="UP000001411">
    <property type="component" value="Chromosome"/>
</dbReference>
<dbReference type="GO" id="GO:0005829">
    <property type="term" value="C:cytosol"/>
    <property type="evidence" value="ECO:0007669"/>
    <property type="project" value="TreeGrafter"/>
</dbReference>
<dbReference type="GO" id="GO:0002161">
    <property type="term" value="F:aminoacyl-tRNA deacylase activity"/>
    <property type="evidence" value="ECO:0007669"/>
    <property type="project" value="InterPro"/>
</dbReference>
<dbReference type="GO" id="GO:0005524">
    <property type="term" value="F:ATP binding"/>
    <property type="evidence" value="ECO:0007669"/>
    <property type="project" value="UniProtKB-UniRule"/>
</dbReference>
<dbReference type="GO" id="GO:0004822">
    <property type="term" value="F:isoleucine-tRNA ligase activity"/>
    <property type="evidence" value="ECO:0007669"/>
    <property type="project" value="UniProtKB-UniRule"/>
</dbReference>
<dbReference type="GO" id="GO:0000049">
    <property type="term" value="F:tRNA binding"/>
    <property type="evidence" value="ECO:0007669"/>
    <property type="project" value="InterPro"/>
</dbReference>
<dbReference type="GO" id="GO:0008270">
    <property type="term" value="F:zinc ion binding"/>
    <property type="evidence" value="ECO:0007669"/>
    <property type="project" value="UniProtKB-UniRule"/>
</dbReference>
<dbReference type="GO" id="GO:0006428">
    <property type="term" value="P:isoleucyl-tRNA aminoacylation"/>
    <property type="evidence" value="ECO:0007669"/>
    <property type="project" value="UniProtKB-UniRule"/>
</dbReference>
<dbReference type="CDD" id="cd07960">
    <property type="entry name" value="Anticodon_Ia_Ile_BEm"/>
    <property type="match status" value="1"/>
</dbReference>
<dbReference type="CDD" id="cd00818">
    <property type="entry name" value="IleRS_core"/>
    <property type="match status" value="1"/>
</dbReference>
<dbReference type="FunFam" id="1.10.10.830:FF:000001">
    <property type="entry name" value="Isoleucine--tRNA ligase"/>
    <property type="match status" value="1"/>
</dbReference>
<dbReference type="FunFam" id="1.10.730.20:FF:000001">
    <property type="entry name" value="Isoleucine--tRNA ligase"/>
    <property type="match status" value="1"/>
</dbReference>
<dbReference type="FunFam" id="3.40.50.620:FF:000152">
    <property type="entry name" value="Isoleucine--tRNA ligase"/>
    <property type="match status" value="1"/>
</dbReference>
<dbReference type="FunFam" id="3.90.740.10:FF:000006">
    <property type="entry name" value="Isoleucine--tRNA ligase"/>
    <property type="match status" value="1"/>
</dbReference>
<dbReference type="Gene3D" id="1.10.730.20">
    <property type="match status" value="1"/>
</dbReference>
<dbReference type="Gene3D" id="3.40.50.620">
    <property type="entry name" value="HUPs"/>
    <property type="match status" value="2"/>
</dbReference>
<dbReference type="Gene3D" id="1.10.10.830">
    <property type="entry name" value="Ile-tRNA synthetase CP2 domain-like"/>
    <property type="match status" value="1"/>
</dbReference>
<dbReference type="HAMAP" id="MF_02002">
    <property type="entry name" value="Ile_tRNA_synth_type1"/>
    <property type="match status" value="1"/>
</dbReference>
<dbReference type="InterPro" id="IPR001412">
    <property type="entry name" value="aa-tRNA-synth_I_CS"/>
</dbReference>
<dbReference type="InterPro" id="IPR002300">
    <property type="entry name" value="aa-tRNA-synth_Ia"/>
</dbReference>
<dbReference type="InterPro" id="IPR033708">
    <property type="entry name" value="Anticodon_Ile_BEm"/>
</dbReference>
<dbReference type="InterPro" id="IPR002301">
    <property type="entry name" value="Ile-tRNA-ligase"/>
</dbReference>
<dbReference type="InterPro" id="IPR023585">
    <property type="entry name" value="Ile-tRNA-ligase_type1"/>
</dbReference>
<dbReference type="InterPro" id="IPR050081">
    <property type="entry name" value="Ile-tRNA_ligase"/>
</dbReference>
<dbReference type="InterPro" id="IPR013155">
    <property type="entry name" value="M/V/L/I-tRNA-synth_anticd-bd"/>
</dbReference>
<dbReference type="InterPro" id="IPR014729">
    <property type="entry name" value="Rossmann-like_a/b/a_fold"/>
</dbReference>
<dbReference type="InterPro" id="IPR009080">
    <property type="entry name" value="tRNAsynth_Ia_anticodon-bd"/>
</dbReference>
<dbReference type="InterPro" id="IPR009008">
    <property type="entry name" value="Val/Leu/Ile-tRNA-synth_edit"/>
</dbReference>
<dbReference type="InterPro" id="IPR010663">
    <property type="entry name" value="Znf_FPG/IleRS"/>
</dbReference>
<dbReference type="NCBIfam" id="TIGR00392">
    <property type="entry name" value="ileS"/>
    <property type="match status" value="1"/>
</dbReference>
<dbReference type="PANTHER" id="PTHR42765:SF1">
    <property type="entry name" value="ISOLEUCINE--TRNA LIGASE, MITOCHONDRIAL"/>
    <property type="match status" value="1"/>
</dbReference>
<dbReference type="PANTHER" id="PTHR42765">
    <property type="entry name" value="SOLEUCYL-TRNA SYNTHETASE"/>
    <property type="match status" value="1"/>
</dbReference>
<dbReference type="Pfam" id="PF08264">
    <property type="entry name" value="Anticodon_1"/>
    <property type="match status" value="1"/>
</dbReference>
<dbReference type="Pfam" id="PF00133">
    <property type="entry name" value="tRNA-synt_1"/>
    <property type="match status" value="1"/>
</dbReference>
<dbReference type="Pfam" id="PF06827">
    <property type="entry name" value="zf-FPG_IleRS"/>
    <property type="match status" value="1"/>
</dbReference>
<dbReference type="PRINTS" id="PR00984">
    <property type="entry name" value="TRNASYNTHILE"/>
</dbReference>
<dbReference type="SUPFAM" id="SSF47323">
    <property type="entry name" value="Anticodon-binding domain of a subclass of class I aminoacyl-tRNA synthetases"/>
    <property type="match status" value="1"/>
</dbReference>
<dbReference type="SUPFAM" id="SSF52374">
    <property type="entry name" value="Nucleotidylyl transferase"/>
    <property type="match status" value="1"/>
</dbReference>
<dbReference type="SUPFAM" id="SSF50677">
    <property type="entry name" value="ValRS/IleRS/LeuRS editing domain"/>
    <property type="match status" value="1"/>
</dbReference>
<dbReference type="PROSITE" id="PS00178">
    <property type="entry name" value="AA_TRNA_LIGASE_I"/>
    <property type="match status" value="1"/>
</dbReference>
<evidence type="ECO:0000255" key="1">
    <source>
        <dbReference type="HAMAP-Rule" id="MF_02002"/>
    </source>
</evidence>
<sequence length="916" mass="105186">MNYKDTLLMPKTDFPMRGGLPNKEPQIQEMWDNDEQYRKALEKNKNNPSFILHDGPPYANGNLHMGHALNKIIKDFIVRYKTMQGFYAPYVPGWDTHGLPIEQALTKKGVDRKKMSVAEFREKCKEFALKQIDIQKKDFKRLGVRGDFNNPYITLTPEYEAAQIRLFGEMADKGLIYKGKKPVYWSPSSESSLAEAEIEYHDKRSASIYVAFDVKDSKGKVDSDAQFIIWTTTPWTIPSNVAITVHPELNYGQYNVNGHKYIVAQALSEAVAEALGWDKDSIQLEKEFTGKELEFVEAQHPFLDRVSLVINGEHVTTDAGTGCVHTAPGHGEDDYIVGQKYDLPVISPLNDKGVFTEEGGPFEGMFYDKANKAVTDLLKEKDALLKLDFITHSYPHDWRTKKPVIFRATPQWFASINKVRQDILDAIEDTNFKVDWGKTRIYNMIRDRGEWVISRQRVWGVPLPVFYAENGDIIMTKETVNHVADLFEKYGSNIWFEKEAKELLPEGFSHPGSPNGEFTKETDIMDVWFDSGSSHRGVLETRPELSFPADLYFEGSDQYRGWFNSSITTAVATRGQAPYKFLLSHGFVMDGEGKKMSKSLGNVIVPDQVVKQKGADIARLWVSSTDYLSDVRISDEILKQTSDVYRKIRNTLRFMLGNINDFNPETDSIAETNLLEVDRYLLNRLREFTASTINNYENFDYLNIYQEVQNFINVELSNFYLDYGKDILYIEKKDSHKRRSMQTVLYQILIDMTKLLAPILVHTAEEVWSHTPHVKEESVHLSDMPKVVDVDEELLEKWNTFMNLRDDVNRALEQARNEKVIGKSLEAKVVIGNNETFNTAEFLQQFNDLQQLFIVSQVEVKDKVNDGVSYQYGDIHIKHAEGEKCERCWNYTEELGSVGELEHLCPRCQEVVKTLV</sequence>
<accession>Q8CSX1</accession>
<gene>
    <name evidence="1" type="primary">ileS</name>
    <name type="ordered locus">SE_0868</name>
</gene>
<proteinExistence type="inferred from homology"/>
<reference key="1">
    <citation type="journal article" date="2003" name="Mol. Microbiol.">
        <title>Genome-based analysis of virulence genes in a non-biofilm-forming Staphylococcus epidermidis strain (ATCC 12228).</title>
        <authorList>
            <person name="Zhang Y.-Q."/>
            <person name="Ren S.-X."/>
            <person name="Li H.-L."/>
            <person name="Wang Y.-X."/>
            <person name="Fu G."/>
            <person name="Yang J."/>
            <person name="Qin Z.-Q."/>
            <person name="Miao Y.-G."/>
            <person name="Wang W.-Y."/>
            <person name="Chen R.-S."/>
            <person name="Shen Y."/>
            <person name="Chen Z."/>
            <person name="Yuan Z.-H."/>
            <person name="Zhao G.-P."/>
            <person name="Qu D."/>
            <person name="Danchin A."/>
            <person name="Wen Y.-M."/>
        </authorList>
    </citation>
    <scope>NUCLEOTIDE SEQUENCE [LARGE SCALE GENOMIC DNA]</scope>
    <source>
        <strain>ATCC 12228 / FDA PCI 1200</strain>
    </source>
</reference>
<feature type="chain" id="PRO_0000098471" description="Isoleucine--tRNA ligase">
    <location>
        <begin position="1"/>
        <end position="916"/>
    </location>
</feature>
<feature type="short sequence motif" description="'HIGH' region">
    <location>
        <begin position="57"/>
        <end position="67"/>
    </location>
</feature>
<feature type="short sequence motif" description="'KMSKS' region">
    <location>
        <begin position="595"/>
        <end position="599"/>
    </location>
</feature>
<feature type="binding site" evidence="1">
    <location>
        <position position="554"/>
    </location>
    <ligand>
        <name>L-isoleucyl-5'-AMP</name>
        <dbReference type="ChEBI" id="CHEBI:178002"/>
    </ligand>
</feature>
<feature type="binding site" evidence="1">
    <location>
        <position position="598"/>
    </location>
    <ligand>
        <name>ATP</name>
        <dbReference type="ChEBI" id="CHEBI:30616"/>
    </ligand>
</feature>
<feature type="binding site" evidence="1">
    <location>
        <position position="885"/>
    </location>
    <ligand>
        <name>Zn(2+)</name>
        <dbReference type="ChEBI" id="CHEBI:29105"/>
    </ligand>
</feature>
<feature type="binding site" evidence="1">
    <location>
        <position position="888"/>
    </location>
    <ligand>
        <name>Zn(2+)</name>
        <dbReference type="ChEBI" id="CHEBI:29105"/>
    </ligand>
</feature>
<feature type="binding site" evidence="1">
    <location>
        <position position="905"/>
    </location>
    <ligand>
        <name>Zn(2+)</name>
        <dbReference type="ChEBI" id="CHEBI:29105"/>
    </ligand>
</feature>
<feature type="binding site" evidence="1">
    <location>
        <position position="908"/>
    </location>
    <ligand>
        <name>Zn(2+)</name>
        <dbReference type="ChEBI" id="CHEBI:29105"/>
    </ligand>
</feature>
<protein>
    <recommendedName>
        <fullName evidence="1">Isoleucine--tRNA ligase</fullName>
        <ecNumber evidence="1">6.1.1.5</ecNumber>
    </recommendedName>
    <alternativeName>
        <fullName evidence="1">Isoleucyl-tRNA synthetase</fullName>
        <shortName evidence="1">IleRS</shortName>
    </alternativeName>
</protein>
<name>SYI_STAES</name>
<comment type="function">
    <text evidence="1">Catalyzes the attachment of isoleucine to tRNA(Ile). As IleRS can inadvertently accommodate and process structurally similar amino acids such as valine, to avoid such errors it has two additional distinct tRNA(Ile)-dependent editing activities. One activity is designated as 'pretransfer' editing and involves the hydrolysis of activated Val-AMP. The other activity is designated 'posttransfer' editing and involves deacylation of mischarged Val-tRNA(Ile).</text>
</comment>
<comment type="catalytic activity">
    <reaction evidence="1">
        <text>tRNA(Ile) + L-isoleucine + ATP = L-isoleucyl-tRNA(Ile) + AMP + diphosphate</text>
        <dbReference type="Rhea" id="RHEA:11060"/>
        <dbReference type="Rhea" id="RHEA-COMP:9666"/>
        <dbReference type="Rhea" id="RHEA-COMP:9695"/>
        <dbReference type="ChEBI" id="CHEBI:30616"/>
        <dbReference type="ChEBI" id="CHEBI:33019"/>
        <dbReference type="ChEBI" id="CHEBI:58045"/>
        <dbReference type="ChEBI" id="CHEBI:78442"/>
        <dbReference type="ChEBI" id="CHEBI:78528"/>
        <dbReference type="ChEBI" id="CHEBI:456215"/>
        <dbReference type="EC" id="6.1.1.5"/>
    </reaction>
</comment>
<comment type="cofactor">
    <cofactor evidence="1">
        <name>Zn(2+)</name>
        <dbReference type="ChEBI" id="CHEBI:29105"/>
    </cofactor>
    <text evidence="1">Binds 1 zinc ion per subunit.</text>
</comment>
<comment type="subunit">
    <text evidence="1">Monomer.</text>
</comment>
<comment type="subcellular location">
    <subcellularLocation>
        <location evidence="1">Cytoplasm</location>
    </subcellularLocation>
</comment>
<comment type="domain">
    <text evidence="1">IleRS has two distinct active sites: one for aminoacylation and one for editing. The misactivated valine is translocated from the active site to the editing site, which sterically excludes the correctly activated isoleucine. The single editing site contains two valyl binding pockets, one specific for each substrate (Val-AMP or Val-tRNA(Ile)).</text>
</comment>
<comment type="similarity">
    <text evidence="1">Belongs to the class-I aminoacyl-tRNA synthetase family. IleS type 1 subfamily.</text>
</comment>
<organism>
    <name type="scientific">Staphylococcus epidermidis (strain ATCC 12228 / FDA PCI 1200)</name>
    <dbReference type="NCBI Taxonomy" id="176280"/>
    <lineage>
        <taxon>Bacteria</taxon>
        <taxon>Bacillati</taxon>
        <taxon>Bacillota</taxon>
        <taxon>Bacilli</taxon>
        <taxon>Bacillales</taxon>
        <taxon>Staphylococcaceae</taxon>
        <taxon>Staphylococcus</taxon>
    </lineage>
</organism>
<keyword id="KW-0030">Aminoacyl-tRNA synthetase</keyword>
<keyword id="KW-0067">ATP-binding</keyword>
<keyword id="KW-0963">Cytoplasm</keyword>
<keyword id="KW-0436">Ligase</keyword>
<keyword id="KW-0479">Metal-binding</keyword>
<keyword id="KW-0547">Nucleotide-binding</keyword>
<keyword id="KW-0648">Protein biosynthesis</keyword>
<keyword id="KW-0862">Zinc</keyword>